<keyword id="KW-0472">Membrane</keyword>
<keyword id="KW-0496">Mitochondrion</keyword>
<keyword id="KW-0999">Mitochondrion inner membrane</keyword>
<keyword id="KW-1185">Reference proteome</keyword>
<keyword id="KW-0809">Transit peptide</keyword>
<accession>Q556V1</accession>
<accession>Q86JV6</accession>
<feature type="transit peptide" description="Mitochondrion" evidence="2">
    <location>
        <begin position="1"/>
        <end status="unknown"/>
    </location>
</feature>
<feature type="chain" id="PRO_0000328287" description="Coenzyme Q-binding protein COQ10, mitochondrial">
    <location>
        <begin status="unknown"/>
        <end position="205"/>
    </location>
</feature>
<proteinExistence type="inferred from homology"/>
<dbReference type="EMBL" id="AAFI02000011">
    <property type="protein sequence ID" value="EAL70592.1"/>
    <property type="molecule type" value="Genomic_DNA"/>
</dbReference>
<dbReference type="EMBL" id="AAFI02000009">
    <property type="protein sequence ID" value="EAL70762.1"/>
    <property type="molecule type" value="Genomic_DNA"/>
</dbReference>
<dbReference type="RefSeq" id="XP_644518.1">
    <property type="nucleotide sequence ID" value="XM_639426.1"/>
</dbReference>
<dbReference type="RefSeq" id="XP_644732.1">
    <property type="nucleotide sequence ID" value="XM_639640.1"/>
</dbReference>
<dbReference type="SMR" id="Q556V1"/>
<dbReference type="FunCoup" id="Q556V1">
    <property type="interactions" value="186"/>
</dbReference>
<dbReference type="STRING" id="44689.Q556V1"/>
<dbReference type="PaxDb" id="44689-DDB0266670"/>
<dbReference type="EnsemblProtists" id="EAL70592">
    <property type="protein sequence ID" value="EAL70592"/>
    <property type="gene ID" value="DDB_G0273803"/>
</dbReference>
<dbReference type="EnsemblProtists" id="EAL70762">
    <property type="protein sequence ID" value="EAL70762"/>
    <property type="gene ID" value="DDB_G0273089"/>
</dbReference>
<dbReference type="GeneID" id="8618832"/>
<dbReference type="GeneID" id="8619144"/>
<dbReference type="KEGG" id="ddi:DDB_G0273089"/>
<dbReference type="KEGG" id="ddi:DDB_G0273803"/>
<dbReference type="dictyBase" id="DDB_G0273089">
    <property type="gene designation" value="coq10-1"/>
</dbReference>
<dbReference type="dictyBase" id="DDB_G0273803">
    <property type="gene designation" value="coq10-2"/>
</dbReference>
<dbReference type="VEuPathDB" id="AmoebaDB:DDB_G0273803"/>
<dbReference type="eggNOG" id="KOG3177">
    <property type="taxonomic scope" value="Eukaryota"/>
</dbReference>
<dbReference type="HOGENOM" id="CLU_079653_1_2_1"/>
<dbReference type="InParanoid" id="Q556V1"/>
<dbReference type="OMA" id="IDGPFKY"/>
<dbReference type="PhylomeDB" id="Q556V1"/>
<dbReference type="PRO" id="PR:Q556V1"/>
<dbReference type="Proteomes" id="UP000002195">
    <property type="component" value="Chromosome 2"/>
</dbReference>
<dbReference type="GO" id="GO:0005743">
    <property type="term" value="C:mitochondrial inner membrane"/>
    <property type="evidence" value="ECO:0007669"/>
    <property type="project" value="UniProtKB-SubCell"/>
</dbReference>
<dbReference type="GO" id="GO:0005739">
    <property type="term" value="C:mitochondrion"/>
    <property type="evidence" value="ECO:0000250"/>
    <property type="project" value="dictyBase"/>
</dbReference>
<dbReference type="GO" id="GO:0048039">
    <property type="term" value="F:ubiquinone binding"/>
    <property type="evidence" value="ECO:0000250"/>
    <property type="project" value="dictyBase"/>
</dbReference>
<dbReference type="GO" id="GO:0045333">
    <property type="term" value="P:cellular respiration"/>
    <property type="evidence" value="ECO:0007669"/>
    <property type="project" value="InterPro"/>
</dbReference>
<dbReference type="CDD" id="cd07813">
    <property type="entry name" value="COQ10p_like"/>
    <property type="match status" value="1"/>
</dbReference>
<dbReference type="Gene3D" id="3.30.530.20">
    <property type="match status" value="1"/>
</dbReference>
<dbReference type="InterPro" id="IPR044996">
    <property type="entry name" value="COQ10-like"/>
</dbReference>
<dbReference type="InterPro" id="IPR005031">
    <property type="entry name" value="COQ10_START"/>
</dbReference>
<dbReference type="InterPro" id="IPR023393">
    <property type="entry name" value="START-like_dom_sf"/>
</dbReference>
<dbReference type="PANTHER" id="PTHR12901:SF10">
    <property type="entry name" value="COENZYME Q-BINDING PROTEIN COQ10, MITOCHONDRIAL"/>
    <property type="match status" value="1"/>
</dbReference>
<dbReference type="PANTHER" id="PTHR12901">
    <property type="entry name" value="SPERM PROTEIN HOMOLOG"/>
    <property type="match status" value="1"/>
</dbReference>
<dbReference type="Pfam" id="PF03364">
    <property type="entry name" value="Polyketide_cyc"/>
    <property type="match status" value="1"/>
</dbReference>
<dbReference type="SUPFAM" id="SSF55961">
    <property type="entry name" value="Bet v1-like"/>
    <property type="match status" value="1"/>
</dbReference>
<gene>
    <name type="primary">coq10-1</name>
    <name type="ORF">DDB_G0273089</name>
</gene>
<gene>
    <name type="primary">coq10-2</name>
    <name type="ORF">DDB_G0273803</name>
</gene>
<comment type="function">
    <text evidence="1">Required for the function of coenzyme Q in the respiratory chain. May serve as a chaperone or may be involved in the transport of Q6 from its site of synthesis to the catalytic sites of the respiratory complexes (By similarity).</text>
</comment>
<comment type="subunit">
    <text evidence="1">Interacts with coenzyme Q.</text>
</comment>
<comment type="subcellular location">
    <subcellularLocation>
        <location evidence="1">Mitochondrion inner membrane</location>
        <topology evidence="1">Peripheral membrane protein</topology>
        <orientation evidence="1">Matrix side</orientation>
    </subcellularLocation>
</comment>
<comment type="similarity">
    <text evidence="3">Belongs to the COQ10 family.</text>
</comment>
<comment type="caution">
    <text evidence="3">The gene for this protein is duplicated in strains AX3 and AX4. These strains contain a duplication of a segment of 750 kb of chromosome 2 compared to the corresponding sequence in strain AX2.</text>
</comment>
<reference key="1">
    <citation type="journal article" date="2002" name="Nature">
        <title>Sequence and analysis of chromosome 2 of Dictyostelium discoideum.</title>
        <authorList>
            <person name="Gloeckner G."/>
            <person name="Eichinger L."/>
            <person name="Szafranski K."/>
            <person name="Pachebat J.A."/>
            <person name="Bankier A.T."/>
            <person name="Dear P.H."/>
            <person name="Lehmann R."/>
            <person name="Baumgart C."/>
            <person name="Parra G."/>
            <person name="Abril J.F."/>
            <person name="Guigo R."/>
            <person name="Kumpf K."/>
            <person name="Tunggal B."/>
            <person name="Cox E.C."/>
            <person name="Quail M.A."/>
            <person name="Platzer M."/>
            <person name="Rosenthal A."/>
            <person name="Noegel A.A."/>
        </authorList>
    </citation>
    <scope>NUCLEOTIDE SEQUENCE [LARGE SCALE GENOMIC DNA]</scope>
    <source>
        <strain>AX4</strain>
    </source>
</reference>
<reference key="2">
    <citation type="journal article" date="2005" name="Nature">
        <title>The genome of the social amoeba Dictyostelium discoideum.</title>
        <authorList>
            <person name="Eichinger L."/>
            <person name="Pachebat J.A."/>
            <person name="Gloeckner G."/>
            <person name="Rajandream M.A."/>
            <person name="Sucgang R."/>
            <person name="Berriman M."/>
            <person name="Song J."/>
            <person name="Olsen R."/>
            <person name="Szafranski K."/>
            <person name="Xu Q."/>
            <person name="Tunggal B."/>
            <person name="Kummerfeld S."/>
            <person name="Madera M."/>
            <person name="Konfortov B.A."/>
            <person name="Rivero F."/>
            <person name="Bankier A.T."/>
            <person name="Lehmann R."/>
            <person name="Hamlin N."/>
            <person name="Davies R."/>
            <person name="Gaudet P."/>
            <person name="Fey P."/>
            <person name="Pilcher K."/>
            <person name="Chen G."/>
            <person name="Saunders D."/>
            <person name="Sodergren E.J."/>
            <person name="Davis P."/>
            <person name="Kerhornou A."/>
            <person name="Nie X."/>
            <person name="Hall N."/>
            <person name="Anjard C."/>
            <person name="Hemphill L."/>
            <person name="Bason N."/>
            <person name="Farbrother P."/>
            <person name="Desany B."/>
            <person name="Just E."/>
            <person name="Morio T."/>
            <person name="Rost R."/>
            <person name="Churcher C.M."/>
            <person name="Cooper J."/>
            <person name="Haydock S."/>
            <person name="van Driessche N."/>
            <person name="Cronin A."/>
            <person name="Goodhead I."/>
            <person name="Muzny D.M."/>
            <person name="Mourier T."/>
            <person name="Pain A."/>
            <person name="Lu M."/>
            <person name="Harper D."/>
            <person name="Lindsay R."/>
            <person name="Hauser H."/>
            <person name="James K.D."/>
            <person name="Quiles M."/>
            <person name="Madan Babu M."/>
            <person name="Saito T."/>
            <person name="Buchrieser C."/>
            <person name="Wardroper A."/>
            <person name="Felder M."/>
            <person name="Thangavelu M."/>
            <person name="Johnson D."/>
            <person name="Knights A."/>
            <person name="Loulseged H."/>
            <person name="Mungall K.L."/>
            <person name="Oliver K."/>
            <person name="Price C."/>
            <person name="Quail M.A."/>
            <person name="Urushihara H."/>
            <person name="Hernandez J."/>
            <person name="Rabbinowitsch E."/>
            <person name="Steffen D."/>
            <person name="Sanders M."/>
            <person name="Ma J."/>
            <person name="Kohara Y."/>
            <person name="Sharp S."/>
            <person name="Simmonds M.N."/>
            <person name="Spiegler S."/>
            <person name="Tivey A."/>
            <person name="Sugano S."/>
            <person name="White B."/>
            <person name="Walker D."/>
            <person name="Woodward J.R."/>
            <person name="Winckler T."/>
            <person name="Tanaka Y."/>
            <person name="Shaulsky G."/>
            <person name="Schleicher M."/>
            <person name="Weinstock G.M."/>
            <person name="Rosenthal A."/>
            <person name="Cox E.C."/>
            <person name="Chisholm R.L."/>
            <person name="Gibbs R.A."/>
            <person name="Loomis W.F."/>
            <person name="Platzer M."/>
            <person name="Kay R.R."/>
            <person name="Williams J.G."/>
            <person name="Dear P.H."/>
            <person name="Noegel A.A."/>
            <person name="Barrell B.G."/>
            <person name="Kuspa A."/>
        </authorList>
    </citation>
    <scope>NUCLEOTIDE SEQUENCE [LARGE SCALE GENOMIC DNA]</scope>
    <source>
        <strain>AX4</strain>
    </source>
</reference>
<protein>
    <recommendedName>
        <fullName>Coenzyme Q-binding protein COQ10, mitochondrial</fullName>
    </recommendedName>
</protein>
<organism>
    <name type="scientific">Dictyostelium discoideum</name>
    <name type="common">Social amoeba</name>
    <dbReference type="NCBI Taxonomy" id="44689"/>
    <lineage>
        <taxon>Eukaryota</taxon>
        <taxon>Amoebozoa</taxon>
        <taxon>Evosea</taxon>
        <taxon>Eumycetozoa</taxon>
        <taxon>Dictyostelia</taxon>
        <taxon>Dictyosteliales</taxon>
        <taxon>Dictyosteliaceae</taxon>
        <taxon>Dictyostelium</taxon>
    </lineage>
</organism>
<name>COQ10_DICDI</name>
<sequence length="205" mass="23681">MIKYSNLVIPKTKSILKSGCNNNIGYGDRYFFNKLFGSNDASDTHNQPTTKIVTKEMTKELKYPVNQVYSVIIKVEDYKEFLPFCLNSTILKREKDKNHFEAELEVGQGTIKESYVSKVVYKENKFIESTATDTPLFHKLINTWSFKQGQTPNTTIAHCKLIYQFKSPFYATLMENFFASSLDVMINSFDKRCDELYGSSNSFKK</sequence>
<evidence type="ECO:0000250" key="1"/>
<evidence type="ECO:0000255" key="2"/>
<evidence type="ECO:0000305" key="3"/>